<feature type="chain" id="PRO_0000065450" description="Uncharacterized protein T05H10.8">
    <location>
        <begin position="1"/>
        <end position="377"/>
    </location>
</feature>
<accession>Q10004</accession>
<proteinExistence type="predicted"/>
<keyword id="KW-1185">Reference proteome</keyword>
<reference key="1">
    <citation type="journal article" date="1998" name="Science">
        <title>Genome sequence of the nematode C. elegans: a platform for investigating biology.</title>
        <authorList>
            <consortium name="The C. elegans sequencing consortium"/>
        </authorList>
    </citation>
    <scope>NUCLEOTIDE SEQUENCE [LARGE SCALE GENOMIC DNA]</scope>
    <source>
        <strain>Bristol N2</strain>
    </source>
</reference>
<name>YRS8_CAEEL</name>
<organism>
    <name type="scientific">Caenorhabditis elegans</name>
    <dbReference type="NCBI Taxonomy" id="6239"/>
    <lineage>
        <taxon>Eukaryota</taxon>
        <taxon>Metazoa</taxon>
        <taxon>Ecdysozoa</taxon>
        <taxon>Nematoda</taxon>
        <taxon>Chromadorea</taxon>
        <taxon>Rhabditida</taxon>
        <taxon>Rhabditina</taxon>
        <taxon>Rhabditomorpha</taxon>
        <taxon>Rhabditoidea</taxon>
        <taxon>Rhabditidae</taxon>
        <taxon>Peloderinae</taxon>
        <taxon>Caenorhabditis</taxon>
    </lineage>
</organism>
<dbReference type="EMBL" id="Z47812">
    <property type="protein sequence ID" value="CAA87794.2"/>
    <property type="molecule type" value="Genomic_DNA"/>
</dbReference>
<dbReference type="PIR" id="T24558">
    <property type="entry name" value="T24558"/>
</dbReference>
<dbReference type="RefSeq" id="NP_495690.2">
    <property type="nucleotide sequence ID" value="NM_063289.4"/>
</dbReference>
<dbReference type="FunCoup" id="Q10004">
    <property type="interactions" value="2"/>
</dbReference>
<dbReference type="iPTMnet" id="Q10004"/>
<dbReference type="PaxDb" id="6239-T05H10.8"/>
<dbReference type="PeptideAtlas" id="Q10004"/>
<dbReference type="EnsemblMetazoa" id="T05H10.8.1">
    <property type="protein sequence ID" value="T05H10.8.1"/>
    <property type="gene ID" value="WBGene00011512"/>
</dbReference>
<dbReference type="GeneID" id="188154"/>
<dbReference type="KEGG" id="cel:CELE_T05H10.8"/>
<dbReference type="UCSC" id="T05H10.8">
    <property type="organism name" value="c. elegans"/>
</dbReference>
<dbReference type="AGR" id="WB:WBGene00011512"/>
<dbReference type="CTD" id="188154"/>
<dbReference type="WormBase" id="T05H10.8">
    <property type="protein sequence ID" value="CE34993"/>
    <property type="gene ID" value="WBGene00011512"/>
</dbReference>
<dbReference type="eggNOG" id="ENOG502SUYT">
    <property type="taxonomic scope" value="Eukaryota"/>
</dbReference>
<dbReference type="HOGENOM" id="CLU_734119_0_0_1"/>
<dbReference type="InParanoid" id="Q10004"/>
<dbReference type="OMA" id="YLMAEEQ"/>
<dbReference type="OrthoDB" id="5857164at2759"/>
<dbReference type="PRO" id="PR:Q10004"/>
<dbReference type="Proteomes" id="UP000001940">
    <property type="component" value="Chromosome II"/>
</dbReference>
<dbReference type="Bgee" id="WBGene00011512">
    <property type="expression patterns" value="Expressed in adult organism and 1 other cell type or tissue"/>
</dbReference>
<dbReference type="Gene3D" id="3.40.30.10">
    <property type="entry name" value="Glutaredoxin"/>
    <property type="match status" value="1"/>
</dbReference>
<dbReference type="InterPro" id="IPR032801">
    <property type="entry name" value="PXL2A/B/C"/>
</dbReference>
<dbReference type="Pfam" id="PF13911">
    <property type="entry name" value="AhpC-TSA_2"/>
    <property type="match status" value="1"/>
</dbReference>
<gene>
    <name type="ORF">T05H10.8</name>
</gene>
<sequence>MFKAYLMAEEQNEQVRDILLLPTTVNDQVGSSADEQIASVVDFFHSKLAEYNEVIQQNSRSVFVANYVQNRFLVTEFCPELAKLFDVLKVKSLEELLQRLTEWEDDPAMKASGKALRESFEAWDIFLREIDDELEKTLGPVKSAVTTLPEDSGILGLQSKTISYYVTGSAFDCVLIIVVRAFNRPEVNEHILGLYNRIDELRKLRCDVFLLTKGPPIGSSGGAYIKLIGVPFRKLYDMNEAEEQLKMNRKSALEYNGWRTLCKVVEASLVEGDSIVAKEASSSEDSVSYISQKGGTVLVDKSGEILYKHIEDDKSDSWPDIDEIVKLVEARNAKYLESTNNSTISIPKGGNLAKVNSEISVTKELATDKKKPCCVIS</sequence>
<protein>
    <recommendedName>
        <fullName>Uncharacterized protein T05H10.8</fullName>
    </recommendedName>
</protein>